<protein>
    <recommendedName>
        <fullName>Tyrosine-protein phosphatase 14</fullName>
        <ecNumber>3.1.3.48</ecNumber>
    </recommendedName>
</protein>
<reference key="1">
    <citation type="journal article" date="1991" name="Immunogenetics">
        <title>Protein tyrosine phosphatase domains from the protochordate Styela plicata.</title>
        <authorList>
            <person name="Matthews R.J."/>
            <person name="Flores E."/>
            <person name="Thomas M.L."/>
        </authorList>
    </citation>
    <scope>NUCLEOTIDE SEQUENCE [MRNA]</scope>
</reference>
<evidence type="ECO:0000250" key="1"/>
<evidence type="ECO:0000255" key="2">
    <source>
        <dbReference type="PROSITE-ProRule" id="PRU00160"/>
    </source>
</evidence>
<evidence type="ECO:0000255" key="3">
    <source>
        <dbReference type="PROSITE-ProRule" id="PRU10044"/>
    </source>
</evidence>
<evidence type="ECO:0000305" key="4"/>
<sequence length="116" mass="13729">WRMITQEKAQVIVMTTKEVERGRNKCIRYWPPEGESKEYGAYTLLNAKENDFRDYTWRQFVITKESDPPYKQIIYHHHFKVWPDHGVPSDPGGVLNFLHEINECQRSLKNPGPVIV</sequence>
<dbReference type="EC" id="3.1.3.48"/>
<dbReference type="EMBL" id="M37999">
    <property type="protein sequence ID" value="AAA29832.1"/>
    <property type="molecule type" value="mRNA"/>
</dbReference>
<dbReference type="SMR" id="P28206"/>
<dbReference type="GO" id="GO:0005737">
    <property type="term" value="C:cytoplasm"/>
    <property type="evidence" value="ECO:0007669"/>
    <property type="project" value="TreeGrafter"/>
</dbReference>
<dbReference type="GO" id="GO:0004726">
    <property type="term" value="F:non-membrane spanning protein tyrosine phosphatase activity"/>
    <property type="evidence" value="ECO:0007669"/>
    <property type="project" value="TreeGrafter"/>
</dbReference>
<dbReference type="GO" id="GO:0001784">
    <property type="term" value="F:phosphotyrosine residue binding"/>
    <property type="evidence" value="ECO:0007669"/>
    <property type="project" value="TreeGrafter"/>
</dbReference>
<dbReference type="GO" id="GO:0030154">
    <property type="term" value="P:cell differentiation"/>
    <property type="evidence" value="ECO:0007669"/>
    <property type="project" value="TreeGrafter"/>
</dbReference>
<dbReference type="GO" id="GO:0035556">
    <property type="term" value="P:intracellular signal transduction"/>
    <property type="evidence" value="ECO:0007669"/>
    <property type="project" value="TreeGrafter"/>
</dbReference>
<dbReference type="GO" id="GO:0000278">
    <property type="term" value="P:mitotic cell cycle"/>
    <property type="evidence" value="ECO:0007669"/>
    <property type="project" value="TreeGrafter"/>
</dbReference>
<dbReference type="Gene3D" id="3.90.190.10">
    <property type="entry name" value="Protein tyrosine phosphatase superfamily"/>
    <property type="match status" value="1"/>
</dbReference>
<dbReference type="InterPro" id="IPR052123">
    <property type="entry name" value="Non-rcpt_Tyr_Phosphatase"/>
</dbReference>
<dbReference type="InterPro" id="IPR029021">
    <property type="entry name" value="Prot-tyrosine_phosphatase-like"/>
</dbReference>
<dbReference type="InterPro" id="IPR000242">
    <property type="entry name" value="PTP_cat"/>
</dbReference>
<dbReference type="PANTHER" id="PTHR46257">
    <property type="entry name" value="TYROSINE-PROTEIN PHOSPHATASE CORKSCREW"/>
    <property type="match status" value="1"/>
</dbReference>
<dbReference type="PANTHER" id="PTHR46257:SF3">
    <property type="entry name" value="TYROSINE-PROTEIN PHOSPHATASE CORKSCREW"/>
    <property type="match status" value="1"/>
</dbReference>
<dbReference type="Pfam" id="PF00102">
    <property type="entry name" value="Y_phosphatase"/>
    <property type="match status" value="1"/>
</dbReference>
<dbReference type="SMART" id="SM00194">
    <property type="entry name" value="PTPc"/>
    <property type="match status" value="1"/>
</dbReference>
<dbReference type="SUPFAM" id="SSF52799">
    <property type="entry name" value="(Phosphotyrosine protein) phosphatases II"/>
    <property type="match status" value="1"/>
</dbReference>
<dbReference type="PROSITE" id="PS50055">
    <property type="entry name" value="TYR_PHOSPHATASE_PTP"/>
    <property type="match status" value="1"/>
</dbReference>
<proteinExistence type="evidence at transcript level"/>
<comment type="catalytic activity">
    <reaction evidence="3">
        <text>O-phospho-L-tyrosyl-[protein] + H2O = L-tyrosyl-[protein] + phosphate</text>
        <dbReference type="Rhea" id="RHEA:10684"/>
        <dbReference type="Rhea" id="RHEA-COMP:10136"/>
        <dbReference type="Rhea" id="RHEA-COMP:20101"/>
        <dbReference type="ChEBI" id="CHEBI:15377"/>
        <dbReference type="ChEBI" id="CHEBI:43474"/>
        <dbReference type="ChEBI" id="CHEBI:46858"/>
        <dbReference type="ChEBI" id="CHEBI:61978"/>
        <dbReference type="EC" id="3.1.3.48"/>
    </reaction>
</comment>
<comment type="similarity">
    <text evidence="4">Belongs to the protein-tyrosine phosphatase family.</text>
</comment>
<name>PTP14_STYPL</name>
<keyword id="KW-0378">Hydrolase</keyword>
<keyword id="KW-0904">Protein phosphatase</keyword>
<accession>P28206</accession>
<feature type="chain" id="PRO_0000094902" description="Tyrosine-protein phosphatase 14">
    <location>
        <begin position="1" status="less than"/>
        <end position="116" status="greater than"/>
    </location>
</feature>
<feature type="domain" description="Tyrosine-protein phosphatase" evidence="2">
    <location>
        <begin position="1" status="less than"/>
        <end position="116" status="greater than"/>
    </location>
</feature>
<feature type="binding site" evidence="1">
    <location>
        <position position="84"/>
    </location>
    <ligand>
        <name>substrate</name>
    </ligand>
</feature>
<feature type="non-terminal residue">
    <location>
        <position position="1"/>
    </location>
</feature>
<feature type="non-terminal residue">
    <location>
        <position position="116"/>
    </location>
</feature>
<organism>
    <name type="scientific">Styela plicata</name>
    <name type="common">Wrinkled sea squirt</name>
    <name type="synonym">Ascidia plicata</name>
    <dbReference type="NCBI Taxonomy" id="7726"/>
    <lineage>
        <taxon>Eukaryota</taxon>
        <taxon>Metazoa</taxon>
        <taxon>Chordata</taxon>
        <taxon>Tunicata</taxon>
        <taxon>Ascidiacea</taxon>
        <taxon>Stolidobranchia</taxon>
        <taxon>Styelidae</taxon>
        <taxon>Styela</taxon>
    </lineage>
</organism>
<gene>
    <name type="primary">STY-14</name>
</gene>